<feature type="chain" id="PRO_1000125110" description="Nicotinate-nucleotide--dimethylbenzimidazole phosphoribosyltransferase">
    <location>
        <begin position="1"/>
        <end position="351"/>
    </location>
</feature>
<feature type="active site" description="Proton acceptor" evidence="1">
    <location>
        <position position="313"/>
    </location>
</feature>
<organism>
    <name type="scientific">Mycobacterium leprae (strain Br4923)</name>
    <dbReference type="NCBI Taxonomy" id="561304"/>
    <lineage>
        <taxon>Bacteria</taxon>
        <taxon>Bacillati</taxon>
        <taxon>Actinomycetota</taxon>
        <taxon>Actinomycetes</taxon>
        <taxon>Mycobacteriales</taxon>
        <taxon>Mycobacteriaceae</taxon>
        <taxon>Mycobacterium</taxon>
    </lineage>
</organism>
<reference key="1">
    <citation type="journal article" date="2009" name="Nat. Genet.">
        <title>Comparative genomic and phylogeographic analysis of Mycobacterium leprae.</title>
        <authorList>
            <person name="Monot M."/>
            <person name="Honore N."/>
            <person name="Garnier T."/>
            <person name="Zidane N."/>
            <person name="Sherafi D."/>
            <person name="Paniz-Mondolfi A."/>
            <person name="Matsuoka M."/>
            <person name="Taylor G.M."/>
            <person name="Donoghue H.D."/>
            <person name="Bouwman A."/>
            <person name="Mays S."/>
            <person name="Watson C."/>
            <person name="Lockwood D."/>
            <person name="Khamispour A."/>
            <person name="Dowlati Y."/>
            <person name="Jianping S."/>
            <person name="Rea T.H."/>
            <person name="Vera-Cabrera L."/>
            <person name="Stefani M.M."/>
            <person name="Banu S."/>
            <person name="Macdonald M."/>
            <person name="Sapkota B.R."/>
            <person name="Spencer J.S."/>
            <person name="Thomas J."/>
            <person name="Harshman K."/>
            <person name="Singh P."/>
            <person name="Busso P."/>
            <person name="Gattiker A."/>
            <person name="Rougemont J."/>
            <person name="Brennan P.J."/>
            <person name="Cole S.T."/>
        </authorList>
    </citation>
    <scope>NUCLEOTIDE SEQUENCE [LARGE SCALE GENOMIC DNA]</scope>
    <source>
        <strain>Br4923</strain>
    </source>
</reference>
<proteinExistence type="inferred from homology"/>
<gene>
    <name evidence="1" type="primary">cobT</name>
    <name type="ordered locus">MLBr00868</name>
</gene>
<comment type="function">
    <text evidence="1">Catalyzes the synthesis of alpha-ribazole-5'-phosphate from nicotinate mononucleotide (NAMN) and 5,6-dimethylbenzimidazole (DMB).</text>
</comment>
<comment type="catalytic activity">
    <reaction evidence="1">
        <text>5,6-dimethylbenzimidazole + nicotinate beta-D-ribonucleotide = alpha-ribazole 5'-phosphate + nicotinate + H(+)</text>
        <dbReference type="Rhea" id="RHEA:11196"/>
        <dbReference type="ChEBI" id="CHEBI:15378"/>
        <dbReference type="ChEBI" id="CHEBI:15890"/>
        <dbReference type="ChEBI" id="CHEBI:32544"/>
        <dbReference type="ChEBI" id="CHEBI:57502"/>
        <dbReference type="ChEBI" id="CHEBI:57918"/>
        <dbReference type="EC" id="2.4.2.21"/>
    </reaction>
</comment>
<comment type="pathway">
    <text evidence="1">Nucleoside biosynthesis; alpha-ribazole biosynthesis; alpha-ribazole from 5,6-dimethylbenzimidazole: step 1/2.</text>
</comment>
<comment type="similarity">
    <text evidence="1">Belongs to the CobT family.</text>
</comment>
<evidence type="ECO:0000255" key="1">
    <source>
        <dbReference type="HAMAP-Rule" id="MF_00230"/>
    </source>
</evidence>
<sequence>MEFAPVSPPDGHAAAAARARQDTLTKPRGALGRLEDLSIWVASCQGQCPPRQFQRARIVVFAGDHGVARSGVSAYPPQLTAQMVANIDRGGAAINALASIADATIRIADLAVDADPLSQQIGIHKVRRGSGDIAIQDALTEDETARAIIAGQRIADEEVDRGADLLIAGDIGIGNTTAAAVLVAALTNAEPVAVVGFGTGIDDASWARKTAAVRDALCRIRLVLPDPVGLLRCCGGADLAAMAGFCAQAAVRRTPLLLDGMVVTAAALVAERLAPGSWQWWQAGHQSTEPGHALALAALDLDPILDLRMRLGEGTGATAALLVLRAAVAALTSMTTFAEAGVAGTSTSPPS</sequence>
<accession>B8ZQK8</accession>
<dbReference type="EC" id="2.4.2.21" evidence="1"/>
<dbReference type="EMBL" id="FM211192">
    <property type="protein sequence ID" value="CAR70963.1"/>
    <property type="molecule type" value="Genomic_DNA"/>
</dbReference>
<dbReference type="SMR" id="B8ZQK8"/>
<dbReference type="KEGG" id="mlb:MLBr00868"/>
<dbReference type="HOGENOM" id="CLU_002982_0_2_11"/>
<dbReference type="UniPathway" id="UPA00061">
    <property type="reaction ID" value="UER00516"/>
</dbReference>
<dbReference type="Proteomes" id="UP000006900">
    <property type="component" value="Chromosome"/>
</dbReference>
<dbReference type="GO" id="GO:0008939">
    <property type="term" value="F:nicotinate-nucleotide-dimethylbenzimidazole phosphoribosyltransferase activity"/>
    <property type="evidence" value="ECO:0007669"/>
    <property type="project" value="UniProtKB-UniRule"/>
</dbReference>
<dbReference type="GO" id="GO:0009236">
    <property type="term" value="P:cobalamin biosynthetic process"/>
    <property type="evidence" value="ECO:0007669"/>
    <property type="project" value="UniProtKB-KW"/>
</dbReference>
<dbReference type="CDD" id="cd02439">
    <property type="entry name" value="DMB-PRT_CobT"/>
    <property type="match status" value="1"/>
</dbReference>
<dbReference type="Gene3D" id="1.10.1610.10">
    <property type="match status" value="1"/>
</dbReference>
<dbReference type="Gene3D" id="3.40.50.10210">
    <property type="match status" value="1"/>
</dbReference>
<dbReference type="HAMAP" id="MF_00230">
    <property type="entry name" value="CobT"/>
    <property type="match status" value="1"/>
</dbReference>
<dbReference type="InterPro" id="IPR003200">
    <property type="entry name" value="Nict_dMeBzImd_PRibTrfase"/>
</dbReference>
<dbReference type="InterPro" id="IPR017846">
    <property type="entry name" value="Nict_dMeBzImd_PRibTrfase_bact"/>
</dbReference>
<dbReference type="InterPro" id="IPR023195">
    <property type="entry name" value="Nict_dMeBzImd_PRibTrfase_N"/>
</dbReference>
<dbReference type="InterPro" id="IPR036087">
    <property type="entry name" value="Nict_dMeBzImd_PRibTrfase_sf"/>
</dbReference>
<dbReference type="NCBIfam" id="TIGR03160">
    <property type="entry name" value="cobT_DBIPRT"/>
    <property type="match status" value="1"/>
</dbReference>
<dbReference type="NCBIfam" id="NF000996">
    <property type="entry name" value="PRK00105.1"/>
    <property type="match status" value="1"/>
</dbReference>
<dbReference type="PANTHER" id="PTHR43463">
    <property type="entry name" value="NICOTINATE-NUCLEOTIDE--DIMETHYLBENZIMIDAZOLE PHOSPHORIBOSYLTRANSFERASE"/>
    <property type="match status" value="1"/>
</dbReference>
<dbReference type="PANTHER" id="PTHR43463:SF1">
    <property type="entry name" value="NICOTINATE-NUCLEOTIDE--DIMETHYLBENZIMIDAZOLE PHOSPHORIBOSYLTRANSFERASE"/>
    <property type="match status" value="1"/>
</dbReference>
<dbReference type="Pfam" id="PF02277">
    <property type="entry name" value="DBI_PRT"/>
    <property type="match status" value="1"/>
</dbReference>
<dbReference type="SUPFAM" id="SSF52733">
    <property type="entry name" value="Nicotinate mononucleotide:5,6-dimethylbenzimidazole phosphoribosyltransferase (CobT)"/>
    <property type="match status" value="1"/>
</dbReference>
<name>COBT_MYCLB</name>
<protein>
    <recommendedName>
        <fullName evidence="1">Nicotinate-nucleotide--dimethylbenzimidazole phosphoribosyltransferase</fullName>
        <shortName evidence="1">NN:DBI PRT</shortName>
        <ecNumber evidence="1">2.4.2.21</ecNumber>
    </recommendedName>
    <alternativeName>
        <fullName evidence="1">N(1)-alpha-phosphoribosyltransferase</fullName>
    </alternativeName>
</protein>
<keyword id="KW-0169">Cobalamin biosynthesis</keyword>
<keyword id="KW-0328">Glycosyltransferase</keyword>
<keyword id="KW-0808">Transferase</keyword>